<accession>B3QBV5</accession>
<organism>
    <name type="scientific">Rhodopseudomonas palustris (strain TIE-1)</name>
    <dbReference type="NCBI Taxonomy" id="395960"/>
    <lineage>
        <taxon>Bacteria</taxon>
        <taxon>Pseudomonadati</taxon>
        <taxon>Pseudomonadota</taxon>
        <taxon>Alphaproteobacteria</taxon>
        <taxon>Hyphomicrobiales</taxon>
        <taxon>Nitrobacteraceae</taxon>
        <taxon>Rhodopseudomonas</taxon>
    </lineage>
</organism>
<feature type="chain" id="PRO_1000091966" description="DNA-directed RNA polymerase subunit alpha">
    <location>
        <begin position="1"/>
        <end position="339"/>
    </location>
</feature>
<feature type="region of interest" description="Alpha N-terminal domain (alpha-NTD)" evidence="1">
    <location>
        <begin position="1"/>
        <end position="235"/>
    </location>
</feature>
<feature type="region of interest" description="Alpha C-terminal domain (alpha-CTD)" evidence="1">
    <location>
        <begin position="251"/>
        <end position="339"/>
    </location>
</feature>
<proteinExistence type="inferred from homology"/>
<protein>
    <recommendedName>
        <fullName evidence="1">DNA-directed RNA polymerase subunit alpha</fullName>
        <shortName evidence="1">RNAP subunit alpha</shortName>
        <ecNumber evidence="1">2.7.7.6</ecNumber>
    </recommendedName>
    <alternativeName>
        <fullName evidence="1">RNA polymerase subunit alpha</fullName>
    </alternativeName>
    <alternativeName>
        <fullName evidence="1">Transcriptase subunit alpha</fullName>
    </alternativeName>
</protein>
<dbReference type="EC" id="2.7.7.6" evidence="1"/>
<dbReference type="EMBL" id="CP001096">
    <property type="protein sequence ID" value="ACF02142.1"/>
    <property type="molecule type" value="Genomic_DNA"/>
</dbReference>
<dbReference type="RefSeq" id="WP_011158771.1">
    <property type="nucleotide sequence ID" value="NC_011004.1"/>
</dbReference>
<dbReference type="SMR" id="B3QBV5"/>
<dbReference type="KEGG" id="rpt:Rpal_3642"/>
<dbReference type="HOGENOM" id="CLU_053084_0_0_5"/>
<dbReference type="OrthoDB" id="9805706at2"/>
<dbReference type="Proteomes" id="UP000001725">
    <property type="component" value="Chromosome"/>
</dbReference>
<dbReference type="GO" id="GO:0005737">
    <property type="term" value="C:cytoplasm"/>
    <property type="evidence" value="ECO:0007669"/>
    <property type="project" value="UniProtKB-ARBA"/>
</dbReference>
<dbReference type="GO" id="GO:0000428">
    <property type="term" value="C:DNA-directed RNA polymerase complex"/>
    <property type="evidence" value="ECO:0007669"/>
    <property type="project" value="UniProtKB-KW"/>
</dbReference>
<dbReference type="GO" id="GO:0003677">
    <property type="term" value="F:DNA binding"/>
    <property type="evidence" value="ECO:0007669"/>
    <property type="project" value="UniProtKB-UniRule"/>
</dbReference>
<dbReference type="GO" id="GO:0003899">
    <property type="term" value="F:DNA-directed RNA polymerase activity"/>
    <property type="evidence" value="ECO:0007669"/>
    <property type="project" value="UniProtKB-UniRule"/>
</dbReference>
<dbReference type="GO" id="GO:0046983">
    <property type="term" value="F:protein dimerization activity"/>
    <property type="evidence" value="ECO:0007669"/>
    <property type="project" value="InterPro"/>
</dbReference>
<dbReference type="GO" id="GO:0006351">
    <property type="term" value="P:DNA-templated transcription"/>
    <property type="evidence" value="ECO:0007669"/>
    <property type="project" value="UniProtKB-UniRule"/>
</dbReference>
<dbReference type="CDD" id="cd06928">
    <property type="entry name" value="RNAP_alpha_NTD"/>
    <property type="match status" value="1"/>
</dbReference>
<dbReference type="FunFam" id="1.10.150.20:FF:000001">
    <property type="entry name" value="DNA-directed RNA polymerase subunit alpha"/>
    <property type="match status" value="1"/>
</dbReference>
<dbReference type="FunFam" id="2.170.120.12:FF:000001">
    <property type="entry name" value="DNA-directed RNA polymerase subunit alpha"/>
    <property type="match status" value="1"/>
</dbReference>
<dbReference type="Gene3D" id="1.10.150.20">
    <property type="entry name" value="5' to 3' exonuclease, C-terminal subdomain"/>
    <property type="match status" value="1"/>
</dbReference>
<dbReference type="Gene3D" id="2.170.120.12">
    <property type="entry name" value="DNA-directed RNA polymerase, insert domain"/>
    <property type="match status" value="1"/>
</dbReference>
<dbReference type="Gene3D" id="3.30.1360.10">
    <property type="entry name" value="RNA polymerase, RBP11-like subunit"/>
    <property type="match status" value="1"/>
</dbReference>
<dbReference type="HAMAP" id="MF_00059">
    <property type="entry name" value="RNApol_bact_RpoA"/>
    <property type="match status" value="1"/>
</dbReference>
<dbReference type="InterPro" id="IPR011262">
    <property type="entry name" value="DNA-dir_RNA_pol_insert"/>
</dbReference>
<dbReference type="InterPro" id="IPR011263">
    <property type="entry name" value="DNA-dir_RNA_pol_RpoA/D/Rpb3"/>
</dbReference>
<dbReference type="InterPro" id="IPR011773">
    <property type="entry name" value="DNA-dir_RpoA"/>
</dbReference>
<dbReference type="InterPro" id="IPR036603">
    <property type="entry name" value="RBP11-like"/>
</dbReference>
<dbReference type="InterPro" id="IPR011260">
    <property type="entry name" value="RNAP_asu_C"/>
</dbReference>
<dbReference type="InterPro" id="IPR036643">
    <property type="entry name" value="RNApol_insert_sf"/>
</dbReference>
<dbReference type="NCBIfam" id="NF003513">
    <property type="entry name" value="PRK05182.1-2"/>
    <property type="match status" value="1"/>
</dbReference>
<dbReference type="NCBIfam" id="NF003519">
    <property type="entry name" value="PRK05182.2-5"/>
    <property type="match status" value="1"/>
</dbReference>
<dbReference type="NCBIfam" id="TIGR02027">
    <property type="entry name" value="rpoA"/>
    <property type="match status" value="1"/>
</dbReference>
<dbReference type="Pfam" id="PF01000">
    <property type="entry name" value="RNA_pol_A_bac"/>
    <property type="match status" value="1"/>
</dbReference>
<dbReference type="Pfam" id="PF03118">
    <property type="entry name" value="RNA_pol_A_CTD"/>
    <property type="match status" value="1"/>
</dbReference>
<dbReference type="Pfam" id="PF01193">
    <property type="entry name" value="RNA_pol_L"/>
    <property type="match status" value="1"/>
</dbReference>
<dbReference type="SMART" id="SM00662">
    <property type="entry name" value="RPOLD"/>
    <property type="match status" value="1"/>
</dbReference>
<dbReference type="SUPFAM" id="SSF47789">
    <property type="entry name" value="C-terminal domain of RNA polymerase alpha subunit"/>
    <property type="match status" value="1"/>
</dbReference>
<dbReference type="SUPFAM" id="SSF56553">
    <property type="entry name" value="Insert subdomain of RNA polymerase alpha subunit"/>
    <property type="match status" value="1"/>
</dbReference>
<dbReference type="SUPFAM" id="SSF55257">
    <property type="entry name" value="RBP11-like subunits of RNA polymerase"/>
    <property type="match status" value="1"/>
</dbReference>
<comment type="function">
    <text evidence="1">DNA-dependent RNA polymerase catalyzes the transcription of DNA into RNA using the four ribonucleoside triphosphates as substrates.</text>
</comment>
<comment type="catalytic activity">
    <reaction evidence="1">
        <text>RNA(n) + a ribonucleoside 5'-triphosphate = RNA(n+1) + diphosphate</text>
        <dbReference type="Rhea" id="RHEA:21248"/>
        <dbReference type="Rhea" id="RHEA-COMP:14527"/>
        <dbReference type="Rhea" id="RHEA-COMP:17342"/>
        <dbReference type="ChEBI" id="CHEBI:33019"/>
        <dbReference type="ChEBI" id="CHEBI:61557"/>
        <dbReference type="ChEBI" id="CHEBI:140395"/>
        <dbReference type="EC" id="2.7.7.6"/>
    </reaction>
</comment>
<comment type="subunit">
    <text evidence="1">Homodimer. The RNAP catalytic core consists of 2 alpha, 1 beta, 1 beta' and 1 omega subunit. When a sigma factor is associated with the core the holoenzyme is formed, which can initiate transcription.</text>
</comment>
<comment type="domain">
    <text evidence="1">The N-terminal domain is essential for RNAP assembly and basal transcription, whereas the C-terminal domain is involved in interaction with transcriptional regulators and with upstream promoter elements.</text>
</comment>
<comment type="similarity">
    <text evidence="1">Belongs to the RNA polymerase alpha chain family.</text>
</comment>
<evidence type="ECO:0000255" key="1">
    <source>
        <dbReference type="HAMAP-Rule" id="MF_00059"/>
    </source>
</evidence>
<sequence length="339" mass="37535">MTIQKNWQELIRPNKLQVTPGSDATRFATLVAEPLERGFGQTLGNALRRVLLSSLQGAAVQSVHIDGVLHEFSSIAGVREDVTDIVLNIKDISLKMQGEGPKRMVVKKQGPGAVTAGDIQTVGDIVVLNPDLQLCTLDDGAEIRMEFTVNTGKGYVAAERNRPEDAPIGLIPVDSLYSPVRKVSYKVENTREGQILDYDKLTMTVETNGAISPEDAVAFAARILQDQLNVFVNFEEPRKEVTQEIIPDLAFNPAFLKKVDELELSVRSANCLKNDNIVYIGDLVQKSEAEMLRTPNFGRKSLNEIKEVLAQMGLHLGMEVPGWPPENIDELAKRFEDHY</sequence>
<name>RPOA_RHOPT</name>
<keyword id="KW-0240">DNA-directed RNA polymerase</keyword>
<keyword id="KW-0548">Nucleotidyltransferase</keyword>
<keyword id="KW-0804">Transcription</keyword>
<keyword id="KW-0808">Transferase</keyword>
<reference key="1">
    <citation type="submission" date="2008-05" db="EMBL/GenBank/DDBJ databases">
        <title>Complete sequence of Rhodopseudomonas palustris TIE-1.</title>
        <authorList>
            <consortium name="US DOE Joint Genome Institute"/>
            <person name="Lucas S."/>
            <person name="Copeland A."/>
            <person name="Lapidus A."/>
            <person name="Glavina del Rio T."/>
            <person name="Dalin E."/>
            <person name="Tice H."/>
            <person name="Pitluck S."/>
            <person name="Chain P."/>
            <person name="Malfatti S."/>
            <person name="Shin M."/>
            <person name="Vergez L."/>
            <person name="Lang D."/>
            <person name="Schmutz J."/>
            <person name="Larimer F."/>
            <person name="Land M."/>
            <person name="Hauser L."/>
            <person name="Kyrpides N."/>
            <person name="Mikhailova N."/>
            <person name="Emerson D."/>
            <person name="Newman D.K."/>
            <person name="Roden E."/>
            <person name="Richardson P."/>
        </authorList>
    </citation>
    <scope>NUCLEOTIDE SEQUENCE [LARGE SCALE GENOMIC DNA]</scope>
    <source>
        <strain>TIE-1</strain>
    </source>
</reference>
<gene>
    <name evidence="1" type="primary">rpoA</name>
    <name type="ordered locus">Rpal_3642</name>
</gene>